<evidence type="ECO:0000255" key="1">
    <source>
        <dbReference type="HAMAP-Rule" id="MF_00508"/>
    </source>
</evidence>
<evidence type="ECO:0000305" key="2"/>
<dbReference type="EMBL" id="CP000504">
    <property type="protein sequence ID" value="ABL87482.1"/>
    <property type="molecule type" value="Genomic_DNA"/>
</dbReference>
<dbReference type="RefSeq" id="WP_011762059.1">
    <property type="nucleotide sequence ID" value="NC_008701.1"/>
</dbReference>
<dbReference type="SMR" id="A1RRA0"/>
<dbReference type="STRING" id="384616.Pisl_0304"/>
<dbReference type="GeneID" id="4616481"/>
<dbReference type="KEGG" id="pis:Pisl_0304"/>
<dbReference type="eggNOG" id="arCOG01758">
    <property type="taxonomic scope" value="Archaea"/>
</dbReference>
<dbReference type="HOGENOM" id="CLU_122625_0_1_2"/>
<dbReference type="OrthoDB" id="371736at2157"/>
<dbReference type="Proteomes" id="UP000002595">
    <property type="component" value="Chromosome"/>
</dbReference>
<dbReference type="GO" id="GO:0015935">
    <property type="term" value="C:small ribosomal subunit"/>
    <property type="evidence" value="ECO:0007669"/>
    <property type="project" value="InterPro"/>
</dbReference>
<dbReference type="GO" id="GO:0003735">
    <property type="term" value="F:structural constituent of ribosome"/>
    <property type="evidence" value="ECO:0007669"/>
    <property type="project" value="InterPro"/>
</dbReference>
<dbReference type="GO" id="GO:0000049">
    <property type="term" value="F:tRNA binding"/>
    <property type="evidence" value="ECO:0007669"/>
    <property type="project" value="UniProtKB-UniRule"/>
</dbReference>
<dbReference type="GO" id="GO:0006412">
    <property type="term" value="P:translation"/>
    <property type="evidence" value="ECO:0007669"/>
    <property type="project" value="UniProtKB-UniRule"/>
</dbReference>
<dbReference type="FunFam" id="3.30.70.600:FF:000004">
    <property type="entry name" value="30S ribosomal protein S10"/>
    <property type="match status" value="1"/>
</dbReference>
<dbReference type="Gene3D" id="3.30.70.600">
    <property type="entry name" value="Ribosomal protein S10 domain"/>
    <property type="match status" value="1"/>
</dbReference>
<dbReference type="HAMAP" id="MF_00508">
    <property type="entry name" value="Ribosomal_uS10"/>
    <property type="match status" value="1"/>
</dbReference>
<dbReference type="InterPro" id="IPR001848">
    <property type="entry name" value="Ribosomal_uS10"/>
</dbReference>
<dbReference type="InterPro" id="IPR018268">
    <property type="entry name" value="Ribosomal_uS10_CS"/>
</dbReference>
<dbReference type="InterPro" id="IPR027486">
    <property type="entry name" value="Ribosomal_uS10_dom"/>
</dbReference>
<dbReference type="InterPro" id="IPR036838">
    <property type="entry name" value="Ribosomal_uS10_dom_sf"/>
</dbReference>
<dbReference type="InterPro" id="IPR005729">
    <property type="entry name" value="Ribosomal_uS10_euk/arc"/>
</dbReference>
<dbReference type="NCBIfam" id="TIGR01046">
    <property type="entry name" value="uS10_euk_arch"/>
    <property type="match status" value="1"/>
</dbReference>
<dbReference type="PANTHER" id="PTHR11700">
    <property type="entry name" value="30S RIBOSOMAL PROTEIN S10 FAMILY MEMBER"/>
    <property type="match status" value="1"/>
</dbReference>
<dbReference type="Pfam" id="PF00338">
    <property type="entry name" value="Ribosomal_S10"/>
    <property type="match status" value="1"/>
</dbReference>
<dbReference type="PRINTS" id="PR00971">
    <property type="entry name" value="RIBOSOMALS10"/>
</dbReference>
<dbReference type="SMART" id="SM01403">
    <property type="entry name" value="Ribosomal_S10"/>
    <property type="match status" value="1"/>
</dbReference>
<dbReference type="SUPFAM" id="SSF54999">
    <property type="entry name" value="Ribosomal protein S10"/>
    <property type="match status" value="1"/>
</dbReference>
<dbReference type="PROSITE" id="PS00361">
    <property type="entry name" value="RIBOSOMAL_S10"/>
    <property type="match status" value="1"/>
</dbReference>
<protein>
    <recommendedName>
        <fullName evidence="1">Small ribosomal subunit protein uS10</fullName>
    </recommendedName>
    <alternativeName>
        <fullName evidence="2">30S ribosomal protein S10</fullName>
    </alternativeName>
</protein>
<organism>
    <name type="scientific">Pyrobaculum islandicum (strain DSM 4184 / JCM 9189 / GEO3)</name>
    <dbReference type="NCBI Taxonomy" id="384616"/>
    <lineage>
        <taxon>Archaea</taxon>
        <taxon>Thermoproteota</taxon>
        <taxon>Thermoprotei</taxon>
        <taxon>Thermoproteales</taxon>
        <taxon>Thermoproteaceae</taxon>
        <taxon>Pyrobaculum</taxon>
    </lineage>
</organism>
<comment type="function">
    <text evidence="1">Involved in the binding of tRNA to the ribosomes.</text>
</comment>
<comment type="subunit">
    <text evidence="1">Part of the 30S ribosomal subunit.</text>
</comment>
<comment type="similarity">
    <text evidence="1">Belongs to the universal ribosomal protein uS10 family.</text>
</comment>
<proteinExistence type="inferred from homology"/>
<accession>A1RRA0</accession>
<reference key="1">
    <citation type="submission" date="2006-12" db="EMBL/GenBank/DDBJ databases">
        <title>Complete sequence of Pyrobaculum islandicum DSM 4184.</title>
        <authorList>
            <person name="Copeland A."/>
            <person name="Lucas S."/>
            <person name="Lapidus A."/>
            <person name="Barry K."/>
            <person name="Detter J.C."/>
            <person name="Glavina del Rio T."/>
            <person name="Dalin E."/>
            <person name="Tice H."/>
            <person name="Pitluck S."/>
            <person name="Meincke L."/>
            <person name="Brettin T."/>
            <person name="Bruce D."/>
            <person name="Han C."/>
            <person name="Tapia R."/>
            <person name="Gilna P."/>
            <person name="Schmutz J."/>
            <person name="Larimer F."/>
            <person name="Land M."/>
            <person name="Hauser L."/>
            <person name="Kyrpides N."/>
            <person name="Mikhailova N."/>
            <person name="Cozen A.E."/>
            <person name="Fitz-Gibbon S.T."/>
            <person name="House C.H."/>
            <person name="Saltikov C."/>
            <person name="Lowe T."/>
            <person name="Richardson P."/>
        </authorList>
    </citation>
    <scope>NUCLEOTIDE SEQUENCE [LARGE SCALE GENOMIC DNA]</scope>
    <source>
        <strain>DSM 4184 / JCM 9189 / GEO3</strain>
    </source>
</reference>
<keyword id="KW-0687">Ribonucleoprotein</keyword>
<keyword id="KW-0689">Ribosomal protein</keyword>
<gene>
    <name evidence="1" type="primary">rps10</name>
    <name type="ordered locus">Pisl_0304</name>
</gene>
<feature type="chain" id="PRO_1000015093" description="Small ribosomal subunit protein uS10">
    <location>
        <begin position="1"/>
        <end position="106"/>
    </location>
</feature>
<name>RS10_PYRIL</name>
<sequence>MSLAARRKVRIRLYGTNPADVEQVAREIVDLAKKMGVQVKGPIPLPTRRLVVTVRRAPSGQGYHTFDHWELRISKRLIDIEASERVLRRLMTIRVPDTVKIELQLI</sequence>